<keyword id="KW-0963">Cytoplasm</keyword>
<keyword id="KW-1185">Reference proteome</keyword>
<keyword id="KW-0687">Ribonucleoprotein</keyword>
<keyword id="KW-0689">Ribosomal protein</keyword>
<feature type="chain" id="PRO_0000318984" description="Large ribosomal subunit protein eL36">
    <location>
        <begin position="1"/>
        <end position="105"/>
    </location>
</feature>
<organism>
    <name type="scientific">Xenopus tropicalis</name>
    <name type="common">Western clawed frog</name>
    <name type="synonym">Silurana tropicalis</name>
    <dbReference type="NCBI Taxonomy" id="8364"/>
    <lineage>
        <taxon>Eukaryota</taxon>
        <taxon>Metazoa</taxon>
        <taxon>Chordata</taxon>
        <taxon>Craniata</taxon>
        <taxon>Vertebrata</taxon>
        <taxon>Euteleostomi</taxon>
        <taxon>Amphibia</taxon>
        <taxon>Batrachia</taxon>
        <taxon>Anura</taxon>
        <taxon>Pipoidea</taxon>
        <taxon>Pipidae</taxon>
        <taxon>Xenopodinae</taxon>
        <taxon>Xenopus</taxon>
        <taxon>Silurana</taxon>
    </lineage>
</organism>
<protein>
    <recommendedName>
        <fullName evidence="3">Large ribosomal subunit protein eL36</fullName>
    </recommendedName>
    <alternativeName>
        <fullName>60S ribosomal protein L36</fullName>
    </alternativeName>
</protein>
<proteinExistence type="inferred from homology"/>
<dbReference type="EMBL" id="BC077033">
    <property type="protein sequence ID" value="AAH77033.1"/>
    <property type="molecule type" value="mRNA"/>
</dbReference>
<dbReference type="RefSeq" id="NP_001005100.1">
    <property type="nucleotide sequence ID" value="NM_001005100.2"/>
</dbReference>
<dbReference type="SMR" id="Q6DER2"/>
<dbReference type="FunCoup" id="Q6DER2">
    <property type="interactions" value="1709"/>
</dbReference>
<dbReference type="STRING" id="8364.ENSXETP00000051043"/>
<dbReference type="PaxDb" id="8364-ENSXETP00000057890"/>
<dbReference type="DNASU" id="448678"/>
<dbReference type="GeneID" id="448678"/>
<dbReference type="KEGG" id="xtr:448678"/>
<dbReference type="AGR" id="Xenbase:XB-GENE-969192"/>
<dbReference type="CTD" id="25873"/>
<dbReference type="Xenbase" id="XB-GENE-969192">
    <property type="gene designation" value="rpl36"/>
</dbReference>
<dbReference type="eggNOG" id="KOG3452">
    <property type="taxonomic scope" value="Eukaryota"/>
</dbReference>
<dbReference type="HOGENOM" id="CLU_140672_2_0_1"/>
<dbReference type="InParanoid" id="Q6DER2"/>
<dbReference type="OMA" id="NKGHKTE"/>
<dbReference type="OrthoDB" id="9616667at2759"/>
<dbReference type="PhylomeDB" id="Q6DER2"/>
<dbReference type="TreeFam" id="TF314463"/>
<dbReference type="Reactome" id="R-XTR-156827">
    <property type="pathway name" value="L13a-mediated translational silencing of Ceruloplasmin expression"/>
</dbReference>
<dbReference type="Reactome" id="R-XTR-1799339">
    <property type="pathway name" value="SRP-dependent cotranslational protein targeting to membrane"/>
</dbReference>
<dbReference type="Reactome" id="R-XTR-6791226">
    <property type="pathway name" value="Major pathway of rRNA processing in the nucleolus and cytosol"/>
</dbReference>
<dbReference type="Reactome" id="R-XTR-72689">
    <property type="pathway name" value="Formation of a pool of free 40S subunits"/>
</dbReference>
<dbReference type="Reactome" id="R-XTR-72706">
    <property type="pathway name" value="GTP hydrolysis and joining of the 60S ribosomal subunit"/>
</dbReference>
<dbReference type="Reactome" id="R-XTR-975956">
    <property type="pathway name" value="Nonsense Mediated Decay (NMD) independent of the Exon Junction Complex (EJC)"/>
</dbReference>
<dbReference type="Reactome" id="R-XTR-975957">
    <property type="pathway name" value="Nonsense Mediated Decay (NMD) enhanced by the Exon Junction Complex (EJC)"/>
</dbReference>
<dbReference type="Proteomes" id="UP000008143">
    <property type="component" value="Chromosome 1"/>
</dbReference>
<dbReference type="Bgee" id="ENSXETG00000039651">
    <property type="expression patterns" value="Expressed in liver and 18 other cell types or tissues"/>
</dbReference>
<dbReference type="GO" id="GO:0005829">
    <property type="term" value="C:cytosol"/>
    <property type="evidence" value="ECO:0007669"/>
    <property type="project" value="UniProtKB-SubCell"/>
</dbReference>
<dbReference type="GO" id="GO:1990904">
    <property type="term" value="C:ribonucleoprotein complex"/>
    <property type="evidence" value="ECO:0007669"/>
    <property type="project" value="UniProtKB-KW"/>
</dbReference>
<dbReference type="GO" id="GO:0005840">
    <property type="term" value="C:ribosome"/>
    <property type="evidence" value="ECO:0007669"/>
    <property type="project" value="UniProtKB-KW"/>
</dbReference>
<dbReference type="GO" id="GO:0003735">
    <property type="term" value="F:structural constituent of ribosome"/>
    <property type="evidence" value="ECO:0007669"/>
    <property type="project" value="InterPro"/>
</dbReference>
<dbReference type="GO" id="GO:0006412">
    <property type="term" value="P:translation"/>
    <property type="evidence" value="ECO:0007669"/>
    <property type="project" value="InterPro"/>
</dbReference>
<dbReference type="FunFam" id="1.10.10.1760:FF:000002">
    <property type="entry name" value="60S ribosomal protein L36"/>
    <property type="match status" value="1"/>
</dbReference>
<dbReference type="Gene3D" id="1.10.10.1760">
    <property type="entry name" value="60S ribosomal protein L36"/>
    <property type="match status" value="1"/>
</dbReference>
<dbReference type="InterPro" id="IPR000509">
    <property type="entry name" value="Ribosomal_eL36"/>
</dbReference>
<dbReference type="InterPro" id="IPR038097">
    <property type="entry name" value="Ribosomal_eL36_sf"/>
</dbReference>
<dbReference type="PANTHER" id="PTHR10114">
    <property type="entry name" value="60S RIBOSOMAL PROTEIN L36"/>
    <property type="match status" value="1"/>
</dbReference>
<dbReference type="Pfam" id="PF01158">
    <property type="entry name" value="Ribosomal_L36e"/>
    <property type="match status" value="1"/>
</dbReference>
<dbReference type="PROSITE" id="PS01190">
    <property type="entry name" value="RIBOSOMAL_L36E"/>
    <property type="match status" value="1"/>
</dbReference>
<sequence length="105" mass="12326">MAIRYPMAVGLNKGHRVTKNVTKPRHCRRRGRLTKHTKFVRDMIREVCGFAPYERRAMELLKVSKDKRALKFIKKRIGTHIRAKRKREELSNVLAAMRKAAAKKD</sequence>
<name>RL36_XENTR</name>
<gene>
    <name type="primary">rpl36</name>
</gene>
<reference key="1">
    <citation type="submission" date="2004-07" db="EMBL/GenBank/DDBJ databases">
        <authorList>
            <consortium name="NIH - Xenopus Gene Collection (XGC) project"/>
        </authorList>
    </citation>
    <scope>NUCLEOTIDE SEQUENCE [LARGE SCALE MRNA]</scope>
    <source>
        <tissue>Embryo</tissue>
    </source>
</reference>
<comment type="function">
    <text evidence="2">Component of the large ribosomal subunit. The ribosome is a large ribonucleoprotein complex responsible for the synthesis of proteins in the cell.</text>
</comment>
<comment type="subunit">
    <text evidence="2">Component of the large ribosomal subunit.</text>
</comment>
<comment type="subcellular location">
    <subcellularLocation>
        <location evidence="2">Cytoplasm</location>
        <location evidence="2">Cytosol</location>
    </subcellularLocation>
    <subcellularLocation>
        <location evidence="2">Cytoplasm</location>
    </subcellularLocation>
    <text evidence="1 2">Detected on cytosolic polysomes.</text>
</comment>
<comment type="similarity">
    <text evidence="3">Belongs to the eukaryotic ribosomal protein eL36 family.</text>
</comment>
<accession>Q6DER2</accession>
<evidence type="ECO:0000250" key="1">
    <source>
        <dbReference type="UniProtKB" id="Q2YGT9"/>
    </source>
</evidence>
<evidence type="ECO:0000250" key="2">
    <source>
        <dbReference type="UniProtKB" id="Q9Y3U8"/>
    </source>
</evidence>
<evidence type="ECO:0000305" key="3"/>